<name>SAT1_MUSSA</name>
<reference key="1">
    <citation type="journal article" date="1993" name="Biochim. Biophys. Acta">
        <title>Cloning and sequence analysis of the gene and cDNA encoding mouse spermidine/spermine N1-acetyltransferase -- a gene uniquely regulated by polyamines and their analogs.</title>
        <authorList>
            <person name="Fogel-Petrovic M."/>
            <person name="Kramer D.L."/>
            <person name="Ganis B."/>
            <person name="Casero R.A. Jr."/>
            <person name="Porter C.W."/>
        </authorList>
    </citation>
    <scope>NUCLEOTIDE SEQUENCE</scope>
    <source>
        <tissue>Liver</tissue>
    </source>
</reference>
<dbReference type="EC" id="2.3.1.57" evidence="2"/>
<dbReference type="EMBL" id="L10245">
    <property type="protein sequence ID" value="AAA16567.1"/>
    <property type="molecule type" value="Unassigned_DNA"/>
</dbReference>
<dbReference type="PIR" id="S43430">
    <property type="entry name" value="S43430"/>
</dbReference>
<dbReference type="SMR" id="P49431"/>
<dbReference type="MGI" id="MGI:98233">
    <property type="gene designation" value="Sat1"/>
</dbReference>
<dbReference type="UniPathway" id="UPA00188">
    <property type="reaction ID" value="UER00363"/>
</dbReference>
<dbReference type="GO" id="GO:0005829">
    <property type="term" value="C:cytosol"/>
    <property type="evidence" value="ECO:0007669"/>
    <property type="project" value="UniProtKB-SubCell"/>
</dbReference>
<dbReference type="GO" id="GO:0004145">
    <property type="term" value="F:diamine N-acetyltransferase activity"/>
    <property type="evidence" value="ECO:0000250"/>
    <property type="project" value="UniProtKB"/>
</dbReference>
<dbReference type="GO" id="GO:0008080">
    <property type="term" value="F:N-acetyltransferase activity"/>
    <property type="evidence" value="ECO:0000250"/>
    <property type="project" value="UniProtKB"/>
</dbReference>
<dbReference type="GO" id="GO:0019809">
    <property type="term" value="F:spermidine binding"/>
    <property type="evidence" value="ECO:0007669"/>
    <property type="project" value="TreeGrafter"/>
</dbReference>
<dbReference type="GO" id="GO:0006596">
    <property type="term" value="P:polyamine biosynthetic process"/>
    <property type="evidence" value="ECO:0000250"/>
    <property type="project" value="UniProtKB"/>
</dbReference>
<dbReference type="GO" id="GO:0009447">
    <property type="term" value="P:putrescine catabolic process"/>
    <property type="evidence" value="ECO:0007669"/>
    <property type="project" value="UniProtKB-UniPathway"/>
</dbReference>
<dbReference type="GO" id="GO:0032918">
    <property type="term" value="P:spermidine acetylation"/>
    <property type="evidence" value="ECO:0000250"/>
    <property type="project" value="UniProtKB"/>
</dbReference>
<dbReference type="CDD" id="cd04301">
    <property type="entry name" value="NAT_SF"/>
    <property type="match status" value="1"/>
</dbReference>
<dbReference type="FunFam" id="3.40.630.30:FF:000011">
    <property type="entry name" value="Diamine acetyltransferase 1"/>
    <property type="match status" value="1"/>
</dbReference>
<dbReference type="Gene3D" id="3.40.630.30">
    <property type="match status" value="1"/>
</dbReference>
<dbReference type="InterPro" id="IPR016181">
    <property type="entry name" value="Acyl_CoA_acyltransferase"/>
</dbReference>
<dbReference type="InterPro" id="IPR051016">
    <property type="entry name" value="Diverse_Substrate_AcTransf"/>
</dbReference>
<dbReference type="InterPro" id="IPR000182">
    <property type="entry name" value="GNAT_dom"/>
</dbReference>
<dbReference type="PANTHER" id="PTHR10545:SF36">
    <property type="entry name" value="DIAMINE ACETYLTRANSFERASE 1"/>
    <property type="match status" value="1"/>
</dbReference>
<dbReference type="PANTHER" id="PTHR10545">
    <property type="entry name" value="DIAMINE N-ACETYLTRANSFERASE"/>
    <property type="match status" value="1"/>
</dbReference>
<dbReference type="Pfam" id="PF00583">
    <property type="entry name" value="Acetyltransf_1"/>
    <property type="match status" value="1"/>
</dbReference>
<dbReference type="SUPFAM" id="SSF55729">
    <property type="entry name" value="Acyl-CoA N-acyltransferases (Nat)"/>
    <property type="match status" value="1"/>
</dbReference>
<dbReference type="PROSITE" id="PS51186">
    <property type="entry name" value="GNAT"/>
    <property type="match status" value="1"/>
</dbReference>
<protein>
    <recommendedName>
        <fullName>Diamine acetyltransferase 1</fullName>
        <ecNumber evidence="2">2.3.1.57</ecNumber>
    </recommendedName>
    <alternativeName>
        <fullName>Polyamine N-acetyltransferase 1</fullName>
    </alternativeName>
    <alternativeName>
        <fullName>Putrescine acetyltransferase</fullName>
    </alternativeName>
    <alternativeName>
        <fullName evidence="4">Spermidine/spermine N(1)-acetyltransferase 1</fullName>
        <shortName evidence="4">SSAT</shortName>
        <shortName>SSAT-1</shortName>
    </alternativeName>
</protein>
<gene>
    <name type="primary">Sat1</name>
    <name type="synonym">Sat</name>
</gene>
<evidence type="ECO:0000250" key="1">
    <source>
        <dbReference type="UniProtKB" id="P0A951"/>
    </source>
</evidence>
<evidence type="ECO:0000250" key="2">
    <source>
        <dbReference type="UniProtKB" id="P21673"/>
    </source>
</evidence>
<evidence type="ECO:0000255" key="3">
    <source>
        <dbReference type="PROSITE-ProRule" id="PRU00532"/>
    </source>
</evidence>
<evidence type="ECO:0000303" key="4">
    <source>
    </source>
</evidence>
<evidence type="ECO:0000305" key="5"/>
<feature type="chain" id="PRO_0000074594" description="Diamine acetyltransferase 1">
    <location>
        <begin position="1"/>
        <end position="171"/>
    </location>
</feature>
<feature type="domain" description="N-acetyltransferase" evidence="3">
    <location>
        <begin position="4"/>
        <end position="170"/>
    </location>
</feature>
<feature type="active site" description="Proton donor" evidence="1">
    <location>
        <position position="140"/>
    </location>
</feature>
<feature type="binding site" evidence="2">
    <location>
        <begin position="27"/>
        <end position="28"/>
    </location>
    <ligand>
        <name>substrate</name>
    </ligand>
</feature>
<feature type="binding site" evidence="2">
    <location>
        <position position="92"/>
    </location>
    <ligand>
        <name>substrate</name>
    </ligand>
</feature>
<feature type="binding site" evidence="2">
    <location>
        <begin position="94"/>
        <end position="96"/>
    </location>
    <ligand>
        <name>acetyl-CoA</name>
        <dbReference type="ChEBI" id="CHEBI:57288"/>
    </ligand>
</feature>
<feature type="binding site" evidence="2">
    <location>
        <begin position="102"/>
        <end position="107"/>
    </location>
    <ligand>
        <name>acetyl-CoA</name>
        <dbReference type="ChEBI" id="CHEBI:57288"/>
    </ligand>
</feature>
<feature type="binding site" evidence="2">
    <location>
        <begin position="126"/>
        <end position="128"/>
    </location>
    <ligand>
        <name>substrate</name>
    </ligand>
</feature>
<feature type="binding site" evidence="2">
    <location>
        <begin position="133"/>
        <end position="136"/>
    </location>
    <ligand>
        <name>acetyl-CoA</name>
        <dbReference type="ChEBI" id="CHEBI:57288"/>
    </ligand>
</feature>
<feature type="binding site" evidence="2">
    <location>
        <begin position="140"/>
        <end position="143"/>
    </location>
    <ligand>
        <name>acetyl-CoA</name>
        <dbReference type="ChEBI" id="CHEBI:57288"/>
    </ligand>
</feature>
<feature type="binding site" evidence="2">
    <location>
        <position position="152"/>
    </location>
    <ligand>
        <name>substrate</name>
    </ligand>
</feature>
<sequence length="171" mass="19997">MAKFKIRPATASDCSDILRLIKELAKYEYMEDQVILTEKDLLEDGFGEHPFYHCLVAEVPKEHWTPEGHSIVGFAMYYFTYDPWIGKLLYLEDFFVMSDYRGFGIGSEILKNLSQVAMKCRCSSMHFLVAEWNEPSINFYKRRGASDLSSEEGWRLFKIDKEYLLKMAAEE</sequence>
<organism>
    <name type="scientific">Mus saxicola</name>
    <name type="common">Brown spiny mouse</name>
    <name type="synonym">Rock-loving mouse</name>
    <dbReference type="NCBI Taxonomy" id="10094"/>
    <lineage>
        <taxon>Eukaryota</taxon>
        <taxon>Metazoa</taxon>
        <taxon>Chordata</taxon>
        <taxon>Craniata</taxon>
        <taxon>Vertebrata</taxon>
        <taxon>Euteleostomi</taxon>
        <taxon>Mammalia</taxon>
        <taxon>Eutheria</taxon>
        <taxon>Euarchontoglires</taxon>
        <taxon>Glires</taxon>
        <taxon>Rodentia</taxon>
        <taxon>Myomorpha</taxon>
        <taxon>Muroidea</taxon>
        <taxon>Muridae</taxon>
        <taxon>Murinae</taxon>
        <taxon>Mus</taxon>
        <taxon>Pyromys</taxon>
    </lineage>
</organism>
<proteinExistence type="inferred from homology"/>
<keyword id="KW-0012">Acyltransferase</keyword>
<keyword id="KW-0963">Cytoplasm</keyword>
<keyword id="KW-0808">Transferase</keyword>
<comment type="function">
    <text evidence="2">Enzyme which catalyzes the acetylation of polyamines. Substrate specificity: norspermidine = spermidine &gt;&gt; spermine &gt; N(1)-acetylspermine. This highly regulated enzyme allows a fine attenuation of the intracellular concentration of polyamines. Also involved in the regulation of polyamine transport out of cells. Also acts on 1,3-diaminopropane and 1,5-diaminopentane.</text>
</comment>
<comment type="catalytic activity">
    <reaction evidence="2">
        <text>an alkane-alpha,omega-diamine + acetyl-CoA = an N-acetylalkane-alpha,omega-diamine + CoA + H(+)</text>
        <dbReference type="Rhea" id="RHEA:11116"/>
        <dbReference type="Rhea" id="RHEA-COMP:9766"/>
        <dbReference type="Rhea" id="RHEA-COMP:9767"/>
        <dbReference type="ChEBI" id="CHEBI:15378"/>
        <dbReference type="ChEBI" id="CHEBI:57287"/>
        <dbReference type="ChEBI" id="CHEBI:57288"/>
        <dbReference type="ChEBI" id="CHEBI:70977"/>
        <dbReference type="ChEBI" id="CHEBI:70988"/>
        <dbReference type="EC" id="2.3.1.57"/>
    </reaction>
    <physiologicalReaction direction="left-to-right" evidence="2">
        <dbReference type="Rhea" id="RHEA:11117"/>
    </physiologicalReaction>
</comment>
<comment type="catalytic activity">
    <reaction evidence="2">
        <text>spermidine + acetyl-CoA = N(1)-acetylspermidine + CoA + H(+)</text>
        <dbReference type="Rhea" id="RHEA:28150"/>
        <dbReference type="ChEBI" id="CHEBI:15378"/>
        <dbReference type="ChEBI" id="CHEBI:57287"/>
        <dbReference type="ChEBI" id="CHEBI:57288"/>
        <dbReference type="ChEBI" id="CHEBI:57834"/>
        <dbReference type="ChEBI" id="CHEBI:58324"/>
        <dbReference type="EC" id="2.3.1.57"/>
    </reaction>
    <physiologicalReaction direction="left-to-right" evidence="2">
        <dbReference type="Rhea" id="RHEA:28151"/>
    </physiologicalReaction>
</comment>
<comment type="catalytic activity">
    <reaction evidence="2">
        <text>spermine + acetyl-CoA = N(1)-acetylspermine + CoA + H(+)</text>
        <dbReference type="Rhea" id="RHEA:33099"/>
        <dbReference type="ChEBI" id="CHEBI:15378"/>
        <dbReference type="ChEBI" id="CHEBI:45725"/>
        <dbReference type="ChEBI" id="CHEBI:57287"/>
        <dbReference type="ChEBI" id="CHEBI:57288"/>
        <dbReference type="ChEBI" id="CHEBI:58101"/>
        <dbReference type="EC" id="2.3.1.57"/>
    </reaction>
    <physiologicalReaction direction="left-to-right" evidence="2">
        <dbReference type="Rhea" id="RHEA:33100"/>
    </physiologicalReaction>
</comment>
<comment type="pathway">
    <text evidence="2">Amine and polyamine degradation; putrescine degradation; N-acetylputrescine from putrescine: step 1/1.</text>
</comment>
<comment type="subunit">
    <text evidence="2">Homodimer.</text>
</comment>
<comment type="subcellular location">
    <subcellularLocation>
        <location evidence="2">Cytoplasm</location>
        <location evidence="2">Cytosol</location>
    </subcellularLocation>
</comment>
<comment type="similarity">
    <text evidence="5">Belongs to the acetyltransferase family.</text>
</comment>
<accession>P49431</accession>